<sequence length="114" mass="13492">MMAIFISIVLVVSFVLFNRVQAKKSIYNYIARQGIQESQLKYIDFHKDFKMGGYWLAVYVEGENPDIYYEYSYQDKKVNFQAYFNSEKAIKKKMWGGSGLTEIEMKKLKYPPLQ</sequence>
<keyword id="KW-0614">Plasmid</keyword>
<name>YGI3_BACTU</name>
<proteinExistence type="predicted"/>
<comment type="function">
    <text>Possibly involved in pGI2 replication mechanism.</text>
</comment>
<organism>
    <name type="scientific">Bacillus thuringiensis</name>
    <dbReference type="NCBI Taxonomy" id="1428"/>
    <lineage>
        <taxon>Bacteria</taxon>
        <taxon>Bacillati</taxon>
        <taxon>Bacillota</taxon>
        <taxon>Bacilli</taxon>
        <taxon>Bacillales</taxon>
        <taxon>Bacillaceae</taxon>
        <taxon>Bacillus</taxon>
        <taxon>Bacillus cereus group</taxon>
    </lineage>
</organism>
<dbReference type="EMBL" id="X13481">
    <property type="protein sequence ID" value="CAA31834.1"/>
    <property type="molecule type" value="Genomic_DNA"/>
</dbReference>
<dbReference type="PIR" id="S02049">
    <property type="entry name" value="S02049"/>
</dbReference>
<dbReference type="InterPro" id="IPR021486">
    <property type="entry name" value="DUF3139"/>
</dbReference>
<dbReference type="Pfam" id="PF11337">
    <property type="entry name" value="DUF3139"/>
    <property type="match status" value="1"/>
</dbReference>
<reference key="1">
    <citation type="journal article" date="1988" name="Nucleic Acids Res.">
        <title>Complete nucleotide sequence of pGI2, a Bacillus thuringiensis plasmid containing Tn4430.</title>
        <authorList>
            <person name="Mahillon J."/>
            <person name="Seurinck J."/>
        </authorList>
    </citation>
    <scope>NUCLEOTIDE SEQUENCE [GENOMIC DNA]</scope>
    <source>
        <strain>H1.1</strain>
    </source>
</reference>
<protein>
    <recommendedName>
        <fullName>Uncharacterized 13.4 kDa protein</fullName>
    </recommendedName>
    <alternativeName>
        <fullName>ORF 3</fullName>
    </alternativeName>
</protein>
<accession>P10024</accession>
<geneLocation type="plasmid">
    <name>pGI2</name>
</geneLocation>
<feature type="chain" id="PRO_0000066230" description="Uncharacterized 13.4 kDa protein">
    <location>
        <begin position="1"/>
        <end position="114"/>
    </location>
</feature>